<accession>B5QW16</accession>
<gene>
    <name evidence="1" type="primary">truD</name>
    <name type="ordered locus">SEN2767</name>
</gene>
<dbReference type="EC" id="5.4.99.27" evidence="1"/>
<dbReference type="EMBL" id="AM933172">
    <property type="protein sequence ID" value="CAR34346.1"/>
    <property type="molecule type" value="Genomic_DNA"/>
</dbReference>
<dbReference type="RefSeq" id="WP_000134246.1">
    <property type="nucleotide sequence ID" value="NC_011294.1"/>
</dbReference>
<dbReference type="SMR" id="B5QW16"/>
<dbReference type="KEGG" id="set:SEN2767"/>
<dbReference type="HOGENOM" id="CLU_005281_4_0_6"/>
<dbReference type="Proteomes" id="UP000000613">
    <property type="component" value="Chromosome"/>
</dbReference>
<dbReference type="GO" id="GO:0005829">
    <property type="term" value="C:cytosol"/>
    <property type="evidence" value="ECO:0007669"/>
    <property type="project" value="TreeGrafter"/>
</dbReference>
<dbReference type="GO" id="GO:0003723">
    <property type="term" value="F:RNA binding"/>
    <property type="evidence" value="ECO:0007669"/>
    <property type="project" value="InterPro"/>
</dbReference>
<dbReference type="GO" id="GO:0160150">
    <property type="term" value="F:tRNA pseudouridine(13) synthase activity"/>
    <property type="evidence" value="ECO:0007669"/>
    <property type="project" value="UniProtKB-EC"/>
</dbReference>
<dbReference type="GO" id="GO:0031119">
    <property type="term" value="P:tRNA pseudouridine synthesis"/>
    <property type="evidence" value="ECO:0007669"/>
    <property type="project" value="UniProtKB-UniRule"/>
</dbReference>
<dbReference type="CDD" id="cd02575">
    <property type="entry name" value="PseudoU_synth_EcTruD"/>
    <property type="match status" value="1"/>
</dbReference>
<dbReference type="FunFam" id="3.30.2340.10:FF:000001">
    <property type="entry name" value="tRNA pseudouridine synthase D"/>
    <property type="match status" value="1"/>
</dbReference>
<dbReference type="FunFam" id="3.30.2350.20:FF:000001">
    <property type="entry name" value="tRNA pseudouridine synthase D"/>
    <property type="match status" value="1"/>
</dbReference>
<dbReference type="Gene3D" id="3.30.2350.20">
    <property type="entry name" value="TruD, catalytic domain"/>
    <property type="match status" value="1"/>
</dbReference>
<dbReference type="Gene3D" id="3.30.2340.10">
    <property type="entry name" value="TruD, insertion domain"/>
    <property type="match status" value="1"/>
</dbReference>
<dbReference type="HAMAP" id="MF_01082">
    <property type="entry name" value="TruD"/>
    <property type="match status" value="1"/>
</dbReference>
<dbReference type="InterPro" id="IPR020103">
    <property type="entry name" value="PsdUridine_synth_cat_dom_sf"/>
</dbReference>
<dbReference type="InterPro" id="IPR001656">
    <property type="entry name" value="PsdUridine_synth_TruD"/>
</dbReference>
<dbReference type="InterPro" id="IPR020119">
    <property type="entry name" value="PsdUridine_synth_TruD_CS"/>
</dbReference>
<dbReference type="InterPro" id="IPR011760">
    <property type="entry name" value="PsdUridine_synth_TruD_insert"/>
</dbReference>
<dbReference type="InterPro" id="IPR042214">
    <property type="entry name" value="TruD_catalytic"/>
</dbReference>
<dbReference type="InterPro" id="IPR043165">
    <property type="entry name" value="TruD_insert_sf"/>
</dbReference>
<dbReference type="InterPro" id="IPR050170">
    <property type="entry name" value="TruD_pseudoU_synthase"/>
</dbReference>
<dbReference type="NCBIfam" id="NF002155">
    <property type="entry name" value="PRK00984.1-4"/>
    <property type="match status" value="1"/>
</dbReference>
<dbReference type="NCBIfam" id="TIGR00094">
    <property type="entry name" value="tRNA_TruD_broad"/>
    <property type="match status" value="1"/>
</dbReference>
<dbReference type="PANTHER" id="PTHR47811">
    <property type="entry name" value="TRNA PSEUDOURIDINE SYNTHASE D"/>
    <property type="match status" value="1"/>
</dbReference>
<dbReference type="PANTHER" id="PTHR47811:SF1">
    <property type="entry name" value="TRNA PSEUDOURIDINE SYNTHASE D"/>
    <property type="match status" value="1"/>
</dbReference>
<dbReference type="Pfam" id="PF01142">
    <property type="entry name" value="TruD"/>
    <property type="match status" value="2"/>
</dbReference>
<dbReference type="SUPFAM" id="SSF55120">
    <property type="entry name" value="Pseudouridine synthase"/>
    <property type="match status" value="1"/>
</dbReference>
<dbReference type="PROSITE" id="PS50984">
    <property type="entry name" value="TRUD"/>
    <property type="match status" value="1"/>
</dbReference>
<dbReference type="PROSITE" id="PS01268">
    <property type="entry name" value="UPF0024"/>
    <property type="match status" value="1"/>
</dbReference>
<organism>
    <name type="scientific">Salmonella enteritidis PT4 (strain P125109)</name>
    <dbReference type="NCBI Taxonomy" id="550537"/>
    <lineage>
        <taxon>Bacteria</taxon>
        <taxon>Pseudomonadati</taxon>
        <taxon>Pseudomonadota</taxon>
        <taxon>Gammaproteobacteria</taxon>
        <taxon>Enterobacterales</taxon>
        <taxon>Enterobacteriaceae</taxon>
        <taxon>Salmonella</taxon>
    </lineage>
</organism>
<sequence length="349" mass="39333">MTEFDNLTWLHGKPQGSGLLKANPEDFVVVEDLGFTPDGEGEHILLRILKNGCNTRFVADALAKFLKIHAREVSFAGQKDKHAVTEQWLCARVPGKEMPDFSAFQLEGCKVLEYARHKRKLRLGALKGNAFTLVLREISDRRDVETRLQAIRDGGVPNYFGAQRFGIGGSNLQGALRWAQSNAPVRDRNKRSFWLSAARSALFNQIVHQRLKKPDFNQVVDGDALQLAGRGSWFVATSEELPELQRRVDEKELMITASLPGSGEWGTQRAALAFEQDAIAQETVLQSLLLREKVEASRRAMLLYPQQLSWNWWDDVTVELRFWLPAGSFATSVVRELINTMGDYAHIAE</sequence>
<feature type="chain" id="PRO_1000136849" description="tRNA pseudouridine synthase D">
    <location>
        <begin position="1"/>
        <end position="349"/>
    </location>
</feature>
<feature type="domain" description="TRUD" evidence="1">
    <location>
        <begin position="155"/>
        <end position="303"/>
    </location>
</feature>
<feature type="active site" description="Nucleophile" evidence="1">
    <location>
        <position position="80"/>
    </location>
</feature>
<feature type="binding site" evidence="1">
    <location>
        <position position="27"/>
    </location>
    <ligand>
        <name>substrate</name>
    </ligand>
</feature>
<feature type="binding site" evidence="1">
    <location>
        <position position="129"/>
    </location>
    <ligand>
        <name>substrate</name>
    </ligand>
</feature>
<feature type="binding site" evidence="1">
    <location>
        <position position="329"/>
    </location>
    <ligand>
        <name>substrate</name>
    </ligand>
</feature>
<proteinExistence type="inferred from homology"/>
<keyword id="KW-0413">Isomerase</keyword>
<keyword id="KW-0819">tRNA processing</keyword>
<name>TRUD_SALEP</name>
<comment type="function">
    <text evidence="1">Responsible for synthesis of pseudouridine from uracil-13 in transfer RNAs.</text>
</comment>
<comment type="catalytic activity">
    <reaction evidence="1">
        <text>uridine(13) in tRNA = pseudouridine(13) in tRNA</text>
        <dbReference type="Rhea" id="RHEA:42540"/>
        <dbReference type="Rhea" id="RHEA-COMP:10105"/>
        <dbReference type="Rhea" id="RHEA-COMP:10106"/>
        <dbReference type="ChEBI" id="CHEBI:65314"/>
        <dbReference type="ChEBI" id="CHEBI:65315"/>
        <dbReference type="EC" id="5.4.99.27"/>
    </reaction>
</comment>
<comment type="similarity">
    <text evidence="1">Belongs to the pseudouridine synthase TruD family.</text>
</comment>
<protein>
    <recommendedName>
        <fullName evidence="1">tRNA pseudouridine synthase D</fullName>
        <ecNumber evidence="1">5.4.99.27</ecNumber>
    </recommendedName>
    <alternativeName>
        <fullName evidence="1">tRNA pseudouridine(13) synthase</fullName>
    </alternativeName>
    <alternativeName>
        <fullName evidence="1">tRNA pseudouridylate synthase D</fullName>
    </alternativeName>
    <alternativeName>
        <fullName evidence="1">tRNA-uridine isomerase D</fullName>
    </alternativeName>
</protein>
<evidence type="ECO:0000255" key="1">
    <source>
        <dbReference type="HAMAP-Rule" id="MF_01082"/>
    </source>
</evidence>
<reference key="1">
    <citation type="journal article" date="2008" name="Genome Res.">
        <title>Comparative genome analysis of Salmonella enteritidis PT4 and Salmonella gallinarum 287/91 provides insights into evolutionary and host adaptation pathways.</title>
        <authorList>
            <person name="Thomson N.R."/>
            <person name="Clayton D.J."/>
            <person name="Windhorst D."/>
            <person name="Vernikos G."/>
            <person name="Davidson S."/>
            <person name="Churcher C."/>
            <person name="Quail M.A."/>
            <person name="Stevens M."/>
            <person name="Jones M.A."/>
            <person name="Watson M."/>
            <person name="Barron A."/>
            <person name="Layton A."/>
            <person name="Pickard D."/>
            <person name="Kingsley R.A."/>
            <person name="Bignell A."/>
            <person name="Clark L."/>
            <person name="Harris B."/>
            <person name="Ormond D."/>
            <person name="Abdellah Z."/>
            <person name="Brooks K."/>
            <person name="Cherevach I."/>
            <person name="Chillingworth T."/>
            <person name="Woodward J."/>
            <person name="Norberczak H."/>
            <person name="Lord A."/>
            <person name="Arrowsmith C."/>
            <person name="Jagels K."/>
            <person name="Moule S."/>
            <person name="Mungall K."/>
            <person name="Saunders M."/>
            <person name="Whitehead S."/>
            <person name="Chabalgoity J.A."/>
            <person name="Maskell D."/>
            <person name="Humphreys T."/>
            <person name="Roberts M."/>
            <person name="Barrow P.A."/>
            <person name="Dougan G."/>
            <person name="Parkhill J."/>
        </authorList>
    </citation>
    <scope>NUCLEOTIDE SEQUENCE [LARGE SCALE GENOMIC DNA]</scope>
    <source>
        <strain>P125109</strain>
    </source>
</reference>